<sequence>MGSAIFEPGPLSLLNLACSNLTERYDGPSPLSASTPGPSPDRPGSATMSSPLSSPTGISYQSLLSGILPAAMFPYGYPPVGYMYPTGFPTLAAIQSGHLAFRQLVPTLPFNTVKSSEGQVKEVVSTQSQKKPLAFSIDSILRPDFGKETNEVKRRHASPHREEPKKKVQYIEQMKKKEEIKEEARTESRLSSSSKDSVPDNDKINPPLPPEASKWPAWVFCTRYSDRPSSGRSPRCRRMKKDKAITPDEKRPRTAFTAEQLSRLKHEFNENRYLTERRRQDLARELGLHENQIKIWFQNNRAKLKKSSGQKNPLALQLMAQGLYNHSTIPTEDDEDDEISSTSLQARIE</sequence>
<comment type="subcellular location">
    <subcellularLocation>
        <location>Nucleus</location>
    </subcellularLocation>
</comment>
<comment type="similarity">
    <text evidence="3">Belongs to the engrailed homeobox family.</text>
</comment>
<feature type="chain" id="PRO_0000196084" description="Homeobox protein engrailed">
    <location>
        <begin position="1"/>
        <end position="349"/>
    </location>
</feature>
<feature type="DNA-binding region" description="Homeobox" evidence="1">
    <location>
        <begin position="249"/>
        <end position="308"/>
    </location>
</feature>
<feature type="region of interest" description="Disordered" evidence="2">
    <location>
        <begin position="26"/>
        <end position="53"/>
    </location>
</feature>
<feature type="region of interest" description="Disordered" evidence="2">
    <location>
        <begin position="146"/>
        <end position="210"/>
    </location>
</feature>
<feature type="region of interest" description="Disordered" evidence="2">
    <location>
        <begin position="228"/>
        <end position="252"/>
    </location>
</feature>
<feature type="region of interest" description="Disordered" evidence="2">
    <location>
        <begin position="327"/>
        <end position="349"/>
    </location>
</feature>
<feature type="compositionally biased region" description="Basic and acidic residues" evidence="2">
    <location>
        <begin position="173"/>
        <end position="188"/>
    </location>
</feature>
<feature type="compositionally biased region" description="Basic and acidic residues" evidence="2">
    <location>
        <begin position="242"/>
        <end position="252"/>
    </location>
</feature>
<organism>
    <name type="scientific">Artemia franciscana</name>
    <name type="common">Brine shrimp</name>
    <name type="synonym">Artemia sanfranciscana</name>
    <dbReference type="NCBI Taxonomy" id="6661"/>
    <lineage>
        <taxon>Eukaryota</taxon>
        <taxon>Metazoa</taxon>
        <taxon>Ecdysozoa</taxon>
        <taxon>Arthropoda</taxon>
        <taxon>Crustacea</taxon>
        <taxon>Branchiopoda</taxon>
        <taxon>Anostraca</taxon>
        <taxon>Artemiidae</taxon>
        <taxon>Artemia</taxon>
    </lineage>
</organism>
<name>HMEN_ARTSF</name>
<keyword id="KW-0217">Developmental protein</keyword>
<keyword id="KW-0238">DNA-binding</keyword>
<keyword id="KW-0371">Homeobox</keyword>
<keyword id="KW-0539">Nucleus</keyword>
<protein>
    <recommendedName>
        <fullName>Homeobox protein engrailed</fullName>
    </recommendedName>
</protein>
<reference key="1">
    <citation type="journal article" date="1993" name="Development">
        <title>Genomic organization and developmental pattern of expression of the engrailed gene from the brine shrimp Artemia.</title>
        <authorList>
            <person name="Manzanares M."/>
            <person name="Marco R."/>
            <person name="Garesse R."/>
        </authorList>
    </citation>
    <scope>NUCLEOTIDE SEQUENCE [MRNA]</scope>
</reference>
<evidence type="ECO:0000255" key="1">
    <source>
        <dbReference type="PROSITE-ProRule" id="PRU00108"/>
    </source>
</evidence>
<evidence type="ECO:0000256" key="2">
    <source>
        <dbReference type="SAM" id="MobiDB-lite"/>
    </source>
</evidence>
<evidence type="ECO:0000305" key="3"/>
<dbReference type="EMBL" id="X70939">
    <property type="protein sequence ID" value="CAA50279.1"/>
    <property type="molecule type" value="mRNA"/>
</dbReference>
<dbReference type="PIR" id="S32040">
    <property type="entry name" value="S32040"/>
</dbReference>
<dbReference type="SMR" id="Q05640"/>
<dbReference type="GO" id="GO:0005634">
    <property type="term" value="C:nucleus"/>
    <property type="evidence" value="ECO:0007669"/>
    <property type="project" value="UniProtKB-SubCell"/>
</dbReference>
<dbReference type="GO" id="GO:0000981">
    <property type="term" value="F:DNA-binding transcription factor activity, RNA polymerase II-specific"/>
    <property type="evidence" value="ECO:0007669"/>
    <property type="project" value="InterPro"/>
</dbReference>
<dbReference type="GO" id="GO:0000978">
    <property type="term" value="F:RNA polymerase II cis-regulatory region sequence-specific DNA binding"/>
    <property type="evidence" value="ECO:0007669"/>
    <property type="project" value="TreeGrafter"/>
</dbReference>
<dbReference type="GO" id="GO:0030182">
    <property type="term" value="P:neuron differentiation"/>
    <property type="evidence" value="ECO:0007669"/>
    <property type="project" value="TreeGrafter"/>
</dbReference>
<dbReference type="CDD" id="cd00086">
    <property type="entry name" value="homeodomain"/>
    <property type="match status" value="1"/>
</dbReference>
<dbReference type="FunFam" id="1.10.10.60:FF:000189">
    <property type="entry name" value="Homeobox protein engrailed-like"/>
    <property type="match status" value="1"/>
</dbReference>
<dbReference type="Gene3D" id="1.10.10.60">
    <property type="entry name" value="Homeodomain-like"/>
    <property type="match status" value="1"/>
</dbReference>
<dbReference type="InterPro" id="IPR050720">
    <property type="entry name" value="Engrailed_Homeobox_TFs"/>
</dbReference>
<dbReference type="InterPro" id="IPR001356">
    <property type="entry name" value="HD"/>
</dbReference>
<dbReference type="InterPro" id="IPR000747">
    <property type="entry name" value="HD_engrailed"/>
</dbReference>
<dbReference type="InterPro" id="IPR020479">
    <property type="entry name" value="HD_metazoa"/>
</dbReference>
<dbReference type="InterPro" id="IPR019549">
    <property type="entry name" value="Homeobox-engrailed_C-terminal"/>
</dbReference>
<dbReference type="InterPro" id="IPR019737">
    <property type="entry name" value="Homeobox-engrailed_CS"/>
</dbReference>
<dbReference type="InterPro" id="IPR017970">
    <property type="entry name" value="Homeobox_CS"/>
</dbReference>
<dbReference type="InterPro" id="IPR009057">
    <property type="entry name" value="Homeodomain-like_sf"/>
</dbReference>
<dbReference type="InterPro" id="IPR000047">
    <property type="entry name" value="HTH_motif"/>
</dbReference>
<dbReference type="PANTHER" id="PTHR24341">
    <property type="entry name" value="HOMEOBOX PROTEIN ENGRAILED"/>
    <property type="match status" value="1"/>
</dbReference>
<dbReference type="PANTHER" id="PTHR24341:SF6">
    <property type="entry name" value="HOMEOBOX PROTEIN INVECTED"/>
    <property type="match status" value="1"/>
</dbReference>
<dbReference type="Pfam" id="PF10525">
    <property type="entry name" value="Engrail_1_C_sig"/>
    <property type="match status" value="1"/>
</dbReference>
<dbReference type="Pfam" id="PF00046">
    <property type="entry name" value="Homeodomain"/>
    <property type="match status" value="1"/>
</dbReference>
<dbReference type="PRINTS" id="PR00026">
    <property type="entry name" value="ENGRAILED"/>
</dbReference>
<dbReference type="PRINTS" id="PR00024">
    <property type="entry name" value="HOMEOBOX"/>
</dbReference>
<dbReference type="PRINTS" id="PR00031">
    <property type="entry name" value="HTHREPRESSR"/>
</dbReference>
<dbReference type="SMART" id="SM00389">
    <property type="entry name" value="HOX"/>
    <property type="match status" value="1"/>
</dbReference>
<dbReference type="SUPFAM" id="SSF46689">
    <property type="entry name" value="Homeodomain-like"/>
    <property type="match status" value="1"/>
</dbReference>
<dbReference type="PROSITE" id="PS00033">
    <property type="entry name" value="ENGRAILED"/>
    <property type="match status" value="1"/>
</dbReference>
<dbReference type="PROSITE" id="PS00027">
    <property type="entry name" value="HOMEOBOX_1"/>
    <property type="match status" value="1"/>
</dbReference>
<dbReference type="PROSITE" id="PS50071">
    <property type="entry name" value="HOMEOBOX_2"/>
    <property type="match status" value="1"/>
</dbReference>
<proteinExistence type="evidence at transcript level"/>
<accession>Q05640</accession>